<sequence>MEFSVKSGSPEKQRSACIVVGVFEPRRLSPIAEQLDKISDGYISALLRRGELEGKVGQTLLLHHVPNILSERILLIGCGKERELDERQYKQVIQKTINTLNDTGSMEAVCFLTELHVKGRNTYWKVRQAVETAKETLYTFDQLKSNKTEPRRPLRKMVFNVPTRRELTSGERAIQHGLAIASGIKAAKDLGNMPPNICNAAYLASQARQLADAFSTNTVTRVIGEQQMKELGMHAYLAVGHGSQNESLMSVIEYKGNPNKDAKPIVLVGKGLTFDSGGISIKPAEGMDEMKYDMCGAATVYGVMRVVAELQLPLNVVGVLAGCENMPGGRAYRPGDILTTMSGQTVEVLNTDAEGRLVLCDALTYVERFEPELVIDIATLTGACVVALGNHLTGLMSNHNPLAHELIGASEQAGDRAWRLPLGEEYYEQLDSNFADMANIGGRAGGAITAGCFLSRFTRKYSWAHLDIAGTAWRSGKNKGATGRPVALLSQFLLNRAGLNGDD</sequence>
<evidence type="ECO:0000255" key="1">
    <source>
        <dbReference type="HAMAP-Rule" id="MF_00181"/>
    </source>
</evidence>
<dbReference type="EC" id="3.4.11.1" evidence="1"/>
<dbReference type="EC" id="3.4.11.10" evidence="1"/>
<dbReference type="EMBL" id="CP000308">
    <property type="protein sequence ID" value="ABG14904.1"/>
    <property type="molecule type" value="Genomic_DNA"/>
</dbReference>
<dbReference type="RefSeq" id="WP_002209310.1">
    <property type="nucleotide sequence ID" value="NZ_CP009906.1"/>
</dbReference>
<dbReference type="SMR" id="Q1C3R8"/>
<dbReference type="MEROPS" id="M17.003"/>
<dbReference type="GeneID" id="57975268"/>
<dbReference type="KEGG" id="ypa:YPA_2942"/>
<dbReference type="Proteomes" id="UP000001971">
    <property type="component" value="Chromosome"/>
</dbReference>
<dbReference type="GO" id="GO:0005737">
    <property type="term" value="C:cytoplasm"/>
    <property type="evidence" value="ECO:0007669"/>
    <property type="project" value="UniProtKB-SubCell"/>
</dbReference>
<dbReference type="GO" id="GO:0030145">
    <property type="term" value="F:manganese ion binding"/>
    <property type="evidence" value="ECO:0007669"/>
    <property type="project" value="UniProtKB-UniRule"/>
</dbReference>
<dbReference type="GO" id="GO:0070006">
    <property type="term" value="F:metalloaminopeptidase activity"/>
    <property type="evidence" value="ECO:0007669"/>
    <property type="project" value="InterPro"/>
</dbReference>
<dbReference type="GO" id="GO:0006508">
    <property type="term" value="P:proteolysis"/>
    <property type="evidence" value="ECO:0007669"/>
    <property type="project" value="UniProtKB-KW"/>
</dbReference>
<dbReference type="CDD" id="cd00433">
    <property type="entry name" value="Peptidase_M17"/>
    <property type="match status" value="1"/>
</dbReference>
<dbReference type="FunFam" id="3.40.220.10:FF:000001">
    <property type="entry name" value="Probable cytosol aminopeptidase"/>
    <property type="match status" value="1"/>
</dbReference>
<dbReference type="FunFam" id="3.40.630.10:FF:000004">
    <property type="entry name" value="Probable cytosol aminopeptidase"/>
    <property type="match status" value="1"/>
</dbReference>
<dbReference type="Gene3D" id="3.40.220.10">
    <property type="entry name" value="Leucine Aminopeptidase, subunit E, domain 1"/>
    <property type="match status" value="1"/>
</dbReference>
<dbReference type="Gene3D" id="3.40.630.10">
    <property type="entry name" value="Zn peptidases"/>
    <property type="match status" value="1"/>
</dbReference>
<dbReference type="HAMAP" id="MF_00181">
    <property type="entry name" value="Cytosol_peptidase_M17"/>
    <property type="match status" value="1"/>
</dbReference>
<dbReference type="InterPro" id="IPR011356">
    <property type="entry name" value="Leucine_aapep/pepB"/>
</dbReference>
<dbReference type="InterPro" id="IPR043472">
    <property type="entry name" value="Macro_dom-like"/>
</dbReference>
<dbReference type="InterPro" id="IPR000819">
    <property type="entry name" value="Peptidase_M17_C"/>
</dbReference>
<dbReference type="InterPro" id="IPR023042">
    <property type="entry name" value="Peptidase_M17_leu_NH2_pept"/>
</dbReference>
<dbReference type="InterPro" id="IPR008283">
    <property type="entry name" value="Peptidase_M17_N"/>
</dbReference>
<dbReference type="NCBIfam" id="NF002072">
    <property type="entry name" value="PRK00913.1-1"/>
    <property type="match status" value="1"/>
</dbReference>
<dbReference type="NCBIfam" id="NF002074">
    <property type="entry name" value="PRK00913.1-4"/>
    <property type="match status" value="1"/>
</dbReference>
<dbReference type="PANTHER" id="PTHR11963:SF23">
    <property type="entry name" value="CYTOSOL AMINOPEPTIDASE"/>
    <property type="match status" value="1"/>
</dbReference>
<dbReference type="PANTHER" id="PTHR11963">
    <property type="entry name" value="LEUCINE AMINOPEPTIDASE-RELATED"/>
    <property type="match status" value="1"/>
</dbReference>
<dbReference type="Pfam" id="PF00883">
    <property type="entry name" value="Peptidase_M17"/>
    <property type="match status" value="1"/>
</dbReference>
<dbReference type="Pfam" id="PF02789">
    <property type="entry name" value="Peptidase_M17_N"/>
    <property type="match status" value="1"/>
</dbReference>
<dbReference type="PRINTS" id="PR00481">
    <property type="entry name" value="LAMNOPPTDASE"/>
</dbReference>
<dbReference type="SUPFAM" id="SSF52949">
    <property type="entry name" value="Macro domain-like"/>
    <property type="match status" value="1"/>
</dbReference>
<dbReference type="SUPFAM" id="SSF53187">
    <property type="entry name" value="Zn-dependent exopeptidases"/>
    <property type="match status" value="1"/>
</dbReference>
<dbReference type="PROSITE" id="PS00631">
    <property type="entry name" value="CYTOSOL_AP"/>
    <property type="match status" value="1"/>
</dbReference>
<accession>Q1C3R8</accession>
<comment type="function">
    <text evidence="1">Presumably involved in the processing and regular turnover of intracellular proteins. Catalyzes the removal of unsubstituted N-terminal amino acids from various peptides.</text>
</comment>
<comment type="catalytic activity">
    <reaction evidence="1">
        <text>Release of an N-terminal amino acid, Xaa-|-Yaa-, in which Xaa is preferably Leu, but may be other amino acids including Pro although not Arg or Lys, and Yaa may be Pro. Amino acid amides and methyl esters are also readily hydrolyzed, but rates on arylamides are exceedingly low.</text>
        <dbReference type="EC" id="3.4.11.1"/>
    </reaction>
</comment>
<comment type="catalytic activity">
    <reaction evidence="1">
        <text>Release of an N-terminal amino acid, preferentially leucine, but not glutamic or aspartic acids.</text>
        <dbReference type="EC" id="3.4.11.10"/>
    </reaction>
</comment>
<comment type="cofactor">
    <cofactor evidence="1">
        <name>Mn(2+)</name>
        <dbReference type="ChEBI" id="CHEBI:29035"/>
    </cofactor>
    <text evidence="1">Binds 2 manganese ions per subunit.</text>
</comment>
<comment type="subcellular location">
    <subcellularLocation>
        <location evidence="1">Cytoplasm</location>
    </subcellularLocation>
</comment>
<comment type="similarity">
    <text evidence="1">Belongs to the peptidase M17 family.</text>
</comment>
<feature type="chain" id="PRO_1000020004" description="Probable cytosol aminopeptidase">
    <location>
        <begin position="1"/>
        <end position="503"/>
    </location>
</feature>
<feature type="active site" evidence="1">
    <location>
        <position position="282"/>
    </location>
</feature>
<feature type="active site" evidence="1">
    <location>
        <position position="356"/>
    </location>
</feature>
<feature type="binding site" evidence="1">
    <location>
        <position position="270"/>
    </location>
    <ligand>
        <name>Mn(2+)</name>
        <dbReference type="ChEBI" id="CHEBI:29035"/>
        <label>2</label>
    </ligand>
</feature>
<feature type="binding site" evidence="1">
    <location>
        <position position="275"/>
    </location>
    <ligand>
        <name>Mn(2+)</name>
        <dbReference type="ChEBI" id="CHEBI:29035"/>
        <label>1</label>
    </ligand>
</feature>
<feature type="binding site" evidence="1">
    <location>
        <position position="275"/>
    </location>
    <ligand>
        <name>Mn(2+)</name>
        <dbReference type="ChEBI" id="CHEBI:29035"/>
        <label>2</label>
    </ligand>
</feature>
<feature type="binding site" evidence="1">
    <location>
        <position position="293"/>
    </location>
    <ligand>
        <name>Mn(2+)</name>
        <dbReference type="ChEBI" id="CHEBI:29035"/>
        <label>2</label>
    </ligand>
</feature>
<feature type="binding site" evidence="1">
    <location>
        <position position="352"/>
    </location>
    <ligand>
        <name>Mn(2+)</name>
        <dbReference type="ChEBI" id="CHEBI:29035"/>
        <label>1</label>
    </ligand>
</feature>
<feature type="binding site" evidence="1">
    <location>
        <position position="354"/>
    </location>
    <ligand>
        <name>Mn(2+)</name>
        <dbReference type="ChEBI" id="CHEBI:29035"/>
        <label>1</label>
    </ligand>
</feature>
<feature type="binding site" evidence="1">
    <location>
        <position position="354"/>
    </location>
    <ligand>
        <name>Mn(2+)</name>
        <dbReference type="ChEBI" id="CHEBI:29035"/>
        <label>2</label>
    </ligand>
</feature>
<name>AMPA_YERPA</name>
<reference key="1">
    <citation type="journal article" date="2006" name="J. Bacteriol.">
        <title>Complete genome sequence of Yersinia pestis strains Antiqua and Nepal516: evidence of gene reduction in an emerging pathogen.</title>
        <authorList>
            <person name="Chain P.S.G."/>
            <person name="Hu P."/>
            <person name="Malfatti S.A."/>
            <person name="Radnedge L."/>
            <person name="Larimer F."/>
            <person name="Vergez L.M."/>
            <person name="Worsham P."/>
            <person name="Chu M.C."/>
            <person name="Andersen G.L."/>
        </authorList>
    </citation>
    <scope>NUCLEOTIDE SEQUENCE [LARGE SCALE GENOMIC DNA]</scope>
    <source>
        <strain>Antiqua</strain>
    </source>
</reference>
<proteinExistence type="inferred from homology"/>
<keyword id="KW-0031">Aminopeptidase</keyword>
<keyword id="KW-0963">Cytoplasm</keyword>
<keyword id="KW-0378">Hydrolase</keyword>
<keyword id="KW-0464">Manganese</keyword>
<keyword id="KW-0479">Metal-binding</keyword>
<keyword id="KW-0645">Protease</keyword>
<protein>
    <recommendedName>
        <fullName evidence="1">Probable cytosol aminopeptidase</fullName>
        <ecNumber evidence="1">3.4.11.1</ecNumber>
    </recommendedName>
    <alternativeName>
        <fullName evidence="1">Leucine aminopeptidase</fullName>
        <shortName evidence="1">LAP</shortName>
        <ecNumber evidence="1">3.4.11.10</ecNumber>
    </alternativeName>
    <alternativeName>
        <fullName evidence="1">Leucyl aminopeptidase</fullName>
    </alternativeName>
</protein>
<organism>
    <name type="scientific">Yersinia pestis bv. Antiqua (strain Antiqua)</name>
    <dbReference type="NCBI Taxonomy" id="360102"/>
    <lineage>
        <taxon>Bacteria</taxon>
        <taxon>Pseudomonadati</taxon>
        <taxon>Pseudomonadota</taxon>
        <taxon>Gammaproteobacteria</taxon>
        <taxon>Enterobacterales</taxon>
        <taxon>Yersiniaceae</taxon>
        <taxon>Yersinia</taxon>
    </lineage>
</organism>
<gene>
    <name evidence="1" type="primary">pepA</name>
    <name type="ordered locus">YPA_2942</name>
</gene>